<evidence type="ECO:0000255" key="1">
    <source>
        <dbReference type="HAMAP-Rule" id="MF_01858"/>
    </source>
</evidence>
<comment type="function">
    <text evidence="1">Specifically methylates the guanine in position 2445 (m2G2445) and the guanine in position 2069 (m7G2069) of 23S rRNA.</text>
</comment>
<comment type="catalytic activity">
    <reaction evidence="1">
        <text>guanosine(2445) in 23S rRNA + S-adenosyl-L-methionine = N(2)-methylguanosine(2445) in 23S rRNA + S-adenosyl-L-homocysteine + H(+)</text>
        <dbReference type="Rhea" id="RHEA:42740"/>
        <dbReference type="Rhea" id="RHEA-COMP:10215"/>
        <dbReference type="Rhea" id="RHEA-COMP:10216"/>
        <dbReference type="ChEBI" id="CHEBI:15378"/>
        <dbReference type="ChEBI" id="CHEBI:57856"/>
        <dbReference type="ChEBI" id="CHEBI:59789"/>
        <dbReference type="ChEBI" id="CHEBI:74269"/>
        <dbReference type="ChEBI" id="CHEBI:74481"/>
        <dbReference type="EC" id="2.1.1.173"/>
    </reaction>
</comment>
<comment type="catalytic activity">
    <reaction evidence="1">
        <text>guanosine(2069) in 23S rRNA + S-adenosyl-L-methionine = N(2)-methylguanosine(2069) in 23S rRNA + S-adenosyl-L-homocysteine + H(+)</text>
        <dbReference type="Rhea" id="RHEA:43772"/>
        <dbReference type="Rhea" id="RHEA-COMP:10688"/>
        <dbReference type="Rhea" id="RHEA-COMP:10689"/>
        <dbReference type="ChEBI" id="CHEBI:15378"/>
        <dbReference type="ChEBI" id="CHEBI:57856"/>
        <dbReference type="ChEBI" id="CHEBI:59789"/>
        <dbReference type="ChEBI" id="CHEBI:74269"/>
        <dbReference type="ChEBI" id="CHEBI:74481"/>
        <dbReference type="EC" id="2.1.1.264"/>
    </reaction>
</comment>
<comment type="subcellular location">
    <subcellularLocation>
        <location evidence="1">Cytoplasm</location>
    </subcellularLocation>
</comment>
<comment type="similarity">
    <text evidence="1">Belongs to the methyltransferase superfamily. RlmKL family.</text>
</comment>
<dbReference type="EC" id="2.1.1.173" evidence="1"/>
<dbReference type="EC" id="2.1.1.264" evidence="1"/>
<dbReference type="EMBL" id="CP000668">
    <property type="protein sequence ID" value="ABP40652.1"/>
    <property type="molecule type" value="Genomic_DNA"/>
</dbReference>
<dbReference type="SMR" id="A4TMZ0"/>
<dbReference type="KEGG" id="ypp:YPDSF_2277"/>
<dbReference type="PATRIC" id="fig|386656.14.peg.3768"/>
<dbReference type="GO" id="GO:0005737">
    <property type="term" value="C:cytoplasm"/>
    <property type="evidence" value="ECO:0007669"/>
    <property type="project" value="UniProtKB-SubCell"/>
</dbReference>
<dbReference type="GO" id="GO:0052915">
    <property type="term" value="F:23S rRNA (guanine(2445)-N(2))-methyltransferase activity"/>
    <property type="evidence" value="ECO:0007669"/>
    <property type="project" value="UniProtKB-UniRule"/>
</dbReference>
<dbReference type="GO" id="GO:0003723">
    <property type="term" value="F:RNA binding"/>
    <property type="evidence" value="ECO:0007669"/>
    <property type="project" value="UniProtKB-KW"/>
</dbReference>
<dbReference type="GO" id="GO:0070043">
    <property type="term" value="F:rRNA (guanine-N7-)-methyltransferase activity"/>
    <property type="evidence" value="ECO:0007669"/>
    <property type="project" value="UniProtKB-UniRule"/>
</dbReference>
<dbReference type="CDD" id="cd02440">
    <property type="entry name" value="AdoMet_MTases"/>
    <property type="match status" value="2"/>
</dbReference>
<dbReference type="CDD" id="cd11715">
    <property type="entry name" value="THUMP_AdoMetMT"/>
    <property type="match status" value="1"/>
</dbReference>
<dbReference type="FunFam" id="3.30.750.80:FF:000001">
    <property type="entry name" value="Ribosomal RNA large subunit methyltransferase K/L"/>
    <property type="match status" value="1"/>
</dbReference>
<dbReference type="FunFam" id="3.40.50.150:FF:000039">
    <property type="entry name" value="Ribosomal RNA large subunit methyltransferase K/L"/>
    <property type="match status" value="1"/>
</dbReference>
<dbReference type="Gene3D" id="3.30.2130.30">
    <property type="match status" value="1"/>
</dbReference>
<dbReference type="Gene3D" id="3.30.750.80">
    <property type="entry name" value="RNA methyltransferase domain (HRMD) like"/>
    <property type="match status" value="1"/>
</dbReference>
<dbReference type="Gene3D" id="3.40.50.150">
    <property type="entry name" value="Vaccinia Virus protein VP39"/>
    <property type="match status" value="2"/>
</dbReference>
<dbReference type="HAMAP" id="MF_01858">
    <property type="entry name" value="23SrRNA_methyltr_KL"/>
    <property type="match status" value="1"/>
</dbReference>
<dbReference type="InterPro" id="IPR017244">
    <property type="entry name" value="23SrRNA_methyltr_KL"/>
</dbReference>
<dbReference type="InterPro" id="IPR002052">
    <property type="entry name" value="DNA_methylase_N6_adenine_CS"/>
</dbReference>
<dbReference type="InterPro" id="IPR000241">
    <property type="entry name" value="RlmKL-like_Mtase"/>
</dbReference>
<dbReference type="InterPro" id="IPR053943">
    <property type="entry name" value="RlmKL-like_Mtase_CS"/>
</dbReference>
<dbReference type="InterPro" id="IPR054170">
    <property type="entry name" value="RlmL_1st"/>
</dbReference>
<dbReference type="InterPro" id="IPR019614">
    <property type="entry name" value="SAM-dep_methyl-trfase"/>
</dbReference>
<dbReference type="InterPro" id="IPR029063">
    <property type="entry name" value="SAM-dependent_MTases_sf"/>
</dbReference>
<dbReference type="InterPro" id="IPR004114">
    <property type="entry name" value="THUMP_dom"/>
</dbReference>
<dbReference type="NCBIfam" id="NF008748">
    <property type="entry name" value="PRK11783.1"/>
    <property type="match status" value="1"/>
</dbReference>
<dbReference type="PANTHER" id="PTHR47313">
    <property type="entry name" value="RIBOSOMAL RNA LARGE SUBUNIT METHYLTRANSFERASE K/L"/>
    <property type="match status" value="1"/>
</dbReference>
<dbReference type="PANTHER" id="PTHR47313:SF1">
    <property type="entry name" value="RIBOSOMAL RNA LARGE SUBUNIT METHYLTRANSFERASE K_L"/>
    <property type="match status" value="1"/>
</dbReference>
<dbReference type="Pfam" id="PF10672">
    <property type="entry name" value="Methyltrans_SAM"/>
    <property type="match status" value="1"/>
</dbReference>
<dbReference type="Pfam" id="PF22020">
    <property type="entry name" value="RlmL_1st"/>
    <property type="match status" value="1"/>
</dbReference>
<dbReference type="Pfam" id="PF02926">
    <property type="entry name" value="THUMP"/>
    <property type="match status" value="1"/>
</dbReference>
<dbReference type="Pfam" id="PF01170">
    <property type="entry name" value="UPF0020"/>
    <property type="match status" value="1"/>
</dbReference>
<dbReference type="PIRSF" id="PIRSF037618">
    <property type="entry name" value="RNA_Mtase_bacteria_prd"/>
    <property type="match status" value="1"/>
</dbReference>
<dbReference type="SMART" id="SM00981">
    <property type="entry name" value="THUMP"/>
    <property type="match status" value="1"/>
</dbReference>
<dbReference type="SUPFAM" id="SSF53335">
    <property type="entry name" value="S-adenosyl-L-methionine-dependent methyltransferases"/>
    <property type="match status" value="2"/>
</dbReference>
<dbReference type="PROSITE" id="PS51165">
    <property type="entry name" value="THUMP"/>
    <property type="match status" value="1"/>
</dbReference>
<dbReference type="PROSITE" id="PS01261">
    <property type="entry name" value="UPF0020"/>
    <property type="match status" value="1"/>
</dbReference>
<gene>
    <name evidence="1" type="primary">rlmL</name>
    <name type="ordered locus">YPDSF_2277</name>
</gene>
<name>RLMKL_YERPP</name>
<reference key="1">
    <citation type="submission" date="2007-02" db="EMBL/GenBank/DDBJ databases">
        <title>Complete sequence of chromosome of Yersinia pestis Pestoides F.</title>
        <authorList>
            <consortium name="US DOE Joint Genome Institute"/>
            <person name="Copeland A."/>
            <person name="Lucas S."/>
            <person name="Lapidus A."/>
            <person name="Barry K."/>
            <person name="Detter J.C."/>
            <person name="Glavina del Rio T."/>
            <person name="Hammon N."/>
            <person name="Israni S."/>
            <person name="Dalin E."/>
            <person name="Tice H."/>
            <person name="Pitluck S."/>
            <person name="Di Bartolo G."/>
            <person name="Chain P."/>
            <person name="Malfatti S."/>
            <person name="Shin M."/>
            <person name="Vergez L."/>
            <person name="Schmutz J."/>
            <person name="Larimer F."/>
            <person name="Land M."/>
            <person name="Hauser L."/>
            <person name="Worsham P."/>
            <person name="Chu M."/>
            <person name="Bearden S."/>
            <person name="Garcia E."/>
            <person name="Richardson P."/>
        </authorList>
    </citation>
    <scope>NUCLEOTIDE SEQUENCE [LARGE SCALE GENOMIC DNA]</scope>
    <source>
        <strain>Pestoides F</strain>
    </source>
</reference>
<keyword id="KW-0963">Cytoplasm</keyword>
<keyword id="KW-0489">Methyltransferase</keyword>
<keyword id="KW-0694">RNA-binding</keyword>
<keyword id="KW-0698">rRNA processing</keyword>
<keyword id="KW-0949">S-adenosyl-L-methionine</keyword>
<keyword id="KW-0808">Transferase</keyword>
<accession>A4TMZ0</accession>
<sequence>MNSLFASTARGLEELLKSELEALGAHDCKIVQGGVHFQGDDRLMYQSLLWSRLASRILLPLNEFKVYSDLDLYLGVQAIDWPSIFGVDKTFAVHFSGVNDEIRNSQYGALKVKDAIVDSFTRKMDQRPTVAKQQPDIRVNVFLQRDMASVALDLSGEGLHQRGYRDLTGQAPLKENLAAAIIQRSGWQPGTPMVDPMCGSGTLLIEAAMMASDRAPGLHRGHWGFTAWNAFNEALWRELTTEAQVRARRGLLETSSRFFGSDIDRRVIEMARANARRAGVAELITFNANDISKLVNPLPEGPVGTVISNPPYGERLESEPALIALHNMFGRMMKTAFGGWRLSLFSASPELLSCLQLRADREFKAKNGPLDCVQKNYQLTANPLGAGGALVAEDYANRLRKNVKKLDKWAKQQGIECYRLYDADLPDYNVAVDRYGSKVVVQEYAPPKTIDPQKARQRLFDVINATLAVLELPSNQLVLKTRERQKGKNQYEKLAQKGEFLLVSEYNAKLWVNLTDYLDTGLFLDHRIARQMLGKMSQGKDFLNLFAYTGTASVHAGLGGARSTTTVDMSRTYLEWAEKNLRVNGLTGQQHRLIQADCLSWLSNTDEQFDVIFIDPPTFSNSKRMETTFDVQRDHLVLMKELKWLLRRKGTIMFSNNKRGFQMDLAGIAALGLEAKEITALTQSEDFARNRQIHNCWLVTHSQEEK</sequence>
<protein>
    <recommendedName>
        <fullName evidence="1">Ribosomal RNA large subunit methyltransferase K/L</fullName>
    </recommendedName>
    <domain>
        <recommendedName>
            <fullName evidence="1">23S rRNA m2G2445 methyltransferase</fullName>
            <ecNumber evidence="1">2.1.1.173</ecNumber>
        </recommendedName>
        <alternativeName>
            <fullName evidence="1">rRNA (guanine-N(2)-)-methyltransferase RlmL</fullName>
        </alternativeName>
    </domain>
    <domain>
        <recommendedName>
            <fullName evidence="1">23S rRNA m7G2069 methyltransferase</fullName>
            <ecNumber evidence="1">2.1.1.264</ecNumber>
        </recommendedName>
        <alternativeName>
            <fullName evidence="1">rRNA (guanine-N(7)-)-methyltransferase RlmK</fullName>
        </alternativeName>
    </domain>
</protein>
<organism>
    <name type="scientific">Yersinia pestis (strain Pestoides F)</name>
    <dbReference type="NCBI Taxonomy" id="386656"/>
    <lineage>
        <taxon>Bacteria</taxon>
        <taxon>Pseudomonadati</taxon>
        <taxon>Pseudomonadota</taxon>
        <taxon>Gammaproteobacteria</taxon>
        <taxon>Enterobacterales</taxon>
        <taxon>Yersiniaceae</taxon>
        <taxon>Yersinia</taxon>
    </lineage>
</organism>
<feature type="chain" id="PRO_0000366867" description="Ribosomal RNA large subunit methyltransferase K/L">
    <location>
        <begin position="1"/>
        <end position="706"/>
    </location>
</feature>
<feature type="domain" description="THUMP" evidence="1">
    <location>
        <begin position="43"/>
        <end position="154"/>
    </location>
</feature>
<proteinExistence type="inferred from homology"/>